<organism>
    <name type="scientific">Pectobacterium atrosepticum (strain SCRI 1043 / ATCC BAA-672)</name>
    <name type="common">Erwinia carotovora subsp. atroseptica</name>
    <dbReference type="NCBI Taxonomy" id="218491"/>
    <lineage>
        <taxon>Bacteria</taxon>
        <taxon>Pseudomonadati</taxon>
        <taxon>Pseudomonadota</taxon>
        <taxon>Gammaproteobacteria</taxon>
        <taxon>Enterobacterales</taxon>
        <taxon>Pectobacteriaceae</taxon>
        <taxon>Pectobacterium</taxon>
    </lineage>
</organism>
<dbReference type="EC" id="5.6.1.7" evidence="1"/>
<dbReference type="EMBL" id="BX950851">
    <property type="protein sequence ID" value="CAG73540.1"/>
    <property type="molecule type" value="Genomic_DNA"/>
</dbReference>
<dbReference type="RefSeq" id="WP_011092243.1">
    <property type="nucleotide sequence ID" value="NC_004547.2"/>
</dbReference>
<dbReference type="SMR" id="Q6D9J0"/>
<dbReference type="STRING" id="218491.ECA0625"/>
<dbReference type="GeneID" id="57207374"/>
<dbReference type="KEGG" id="eca:ECA0625"/>
<dbReference type="eggNOG" id="COG0459">
    <property type="taxonomic scope" value="Bacteria"/>
</dbReference>
<dbReference type="HOGENOM" id="CLU_016503_3_0_6"/>
<dbReference type="OrthoDB" id="9766614at2"/>
<dbReference type="Proteomes" id="UP000007966">
    <property type="component" value="Chromosome"/>
</dbReference>
<dbReference type="GO" id="GO:0005737">
    <property type="term" value="C:cytoplasm"/>
    <property type="evidence" value="ECO:0007669"/>
    <property type="project" value="UniProtKB-SubCell"/>
</dbReference>
<dbReference type="GO" id="GO:0005524">
    <property type="term" value="F:ATP binding"/>
    <property type="evidence" value="ECO:0007669"/>
    <property type="project" value="UniProtKB-UniRule"/>
</dbReference>
<dbReference type="GO" id="GO:0140662">
    <property type="term" value="F:ATP-dependent protein folding chaperone"/>
    <property type="evidence" value="ECO:0007669"/>
    <property type="project" value="InterPro"/>
</dbReference>
<dbReference type="GO" id="GO:0016853">
    <property type="term" value="F:isomerase activity"/>
    <property type="evidence" value="ECO:0007669"/>
    <property type="project" value="UniProtKB-KW"/>
</dbReference>
<dbReference type="GO" id="GO:0051082">
    <property type="term" value="F:unfolded protein binding"/>
    <property type="evidence" value="ECO:0007669"/>
    <property type="project" value="UniProtKB-UniRule"/>
</dbReference>
<dbReference type="GO" id="GO:0042026">
    <property type="term" value="P:protein refolding"/>
    <property type="evidence" value="ECO:0007669"/>
    <property type="project" value="UniProtKB-UniRule"/>
</dbReference>
<dbReference type="CDD" id="cd03344">
    <property type="entry name" value="GroEL"/>
    <property type="match status" value="1"/>
</dbReference>
<dbReference type="FunFam" id="1.10.560.10:FF:000001">
    <property type="entry name" value="60 kDa chaperonin"/>
    <property type="match status" value="1"/>
</dbReference>
<dbReference type="FunFam" id="3.50.7.10:FF:000001">
    <property type="entry name" value="60 kDa chaperonin"/>
    <property type="match status" value="1"/>
</dbReference>
<dbReference type="Gene3D" id="3.50.7.10">
    <property type="entry name" value="GroEL"/>
    <property type="match status" value="1"/>
</dbReference>
<dbReference type="Gene3D" id="1.10.560.10">
    <property type="entry name" value="GroEL-like equatorial domain"/>
    <property type="match status" value="1"/>
</dbReference>
<dbReference type="Gene3D" id="3.30.260.10">
    <property type="entry name" value="TCP-1-like chaperonin intermediate domain"/>
    <property type="match status" value="1"/>
</dbReference>
<dbReference type="HAMAP" id="MF_00600">
    <property type="entry name" value="CH60"/>
    <property type="match status" value="1"/>
</dbReference>
<dbReference type="InterPro" id="IPR018370">
    <property type="entry name" value="Chaperonin_Cpn60_CS"/>
</dbReference>
<dbReference type="InterPro" id="IPR001844">
    <property type="entry name" value="Cpn60/GroEL"/>
</dbReference>
<dbReference type="InterPro" id="IPR002423">
    <property type="entry name" value="Cpn60/GroEL/TCP-1"/>
</dbReference>
<dbReference type="InterPro" id="IPR027409">
    <property type="entry name" value="GroEL-like_apical_dom_sf"/>
</dbReference>
<dbReference type="InterPro" id="IPR027413">
    <property type="entry name" value="GROEL-like_equatorial_sf"/>
</dbReference>
<dbReference type="InterPro" id="IPR027410">
    <property type="entry name" value="TCP-1-like_intermed_sf"/>
</dbReference>
<dbReference type="NCBIfam" id="TIGR02348">
    <property type="entry name" value="GroEL"/>
    <property type="match status" value="1"/>
</dbReference>
<dbReference type="NCBIfam" id="NF000592">
    <property type="entry name" value="PRK00013.1"/>
    <property type="match status" value="1"/>
</dbReference>
<dbReference type="NCBIfam" id="NF009487">
    <property type="entry name" value="PRK12849.1"/>
    <property type="match status" value="1"/>
</dbReference>
<dbReference type="NCBIfam" id="NF009488">
    <property type="entry name" value="PRK12850.1"/>
    <property type="match status" value="1"/>
</dbReference>
<dbReference type="NCBIfam" id="NF009489">
    <property type="entry name" value="PRK12851.1"/>
    <property type="match status" value="1"/>
</dbReference>
<dbReference type="PANTHER" id="PTHR45633">
    <property type="entry name" value="60 KDA HEAT SHOCK PROTEIN, MITOCHONDRIAL"/>
    <property type="match status" value="1"/>
</dbReference>
<dbReference type="Pfam" id="PF00118">
    <property type="entry name" value="Cpn60_TCP1"/>
    <property type="match status" value="1"/>
</dbReference>
<dbReference type="PRINTS" id="PR00298">
    <property type="entry name" value="CHAPERONIN60"/>
</dbReference>
<dbReference type="SUPFAM" id="SSF52029">
    <property type="entry name" value="GroEL apical domain-like"/>
    <property type="match status" value="1"/>
</dbReference>
<dbReference type="SUPFAM" id="SSF48592">
    <property type="entry name" value="GroEL equatorial domain-like"/>
    <property type="match status" value="1"/>
</dbReference>
<dbReference type="SUPFAM" id="SSF54849">
    <property type="entry name" value="GroEL-intermediate domain like"/>
    <property type="match status" value="1"/>
</dbReference>
<dbReference type="PROSITE" id="PS00296">
    <property type="entry name" value="CHAPERONINS_CPN60"/>
    <property type="match status" value="1"/>
</dbReference>
<feature type="chain" id="PRO_0000063376" description="Chaperonin GroEL">
    <location>
        <begin position="1"/>
        <end position="549"/>
    </location>
</feature>
<feature type="binding site" evidence="1">
    <location>
        <begin position="30"/>
        <end position="33"/>
    </location>
    <ligand>
        <name>ATP</name>
        <dbReference type="ChEBI" id="CHEBI:30616"/>
    </ligand>
</feature>
<feature type="binding site" evidence="1">
    <location>
        <position position="51"/>
    </location>
    <ligand>
        <name>ATP</name>
        <dbReference type="ChEBI" id="CHEBI:30616"/>
    </ligand>
</feature>
<feature type="binding site" evidence="1">
    <location>
        <begin position="87"/>
        <end position="91"/>
    </location>
    <ligand>
        <name>ATP</name>
        <dbReference type="ChEBI" id="CHEBI:30616"/>
    </ligand>
</feature>
<feature type="binding site" evidence="1">
    <location>
        <position position="415"/>
    </location>
    <ligand>
        <name>ATP</name>
        <dbReference type="ChEBI" id="CHEBI:30616"/>
    </ligand>
</feature>
<feature type="binding site" evidence="1">
    <location>
        <position position="497"/>
    </location>
    <ligand>
        <name>ATP</name>
        <dbReference type="ChEBI" id="CHEBI:30616"/>
    </ligand>
</feature>
<sequence>MAAKDVKFGNDARVKMLRGVNVLADAVKVTLGPKGRNVVLDKSFGAPTITKDGVSVAREIELEDKFENMGAQMVKEVASKANDAAGDGTTTATVLAQSIITEGLKAVAAGMNPMDLKRGIDKAVIAAVEELKKQSVPCSDFKAIAQVGTISANSDETVGKLIAEAMEKVGKEGVITVEEGTGLQDELDVVEGMQFDRGYLSPYFINKPETGSIELESPFILLADKKISNIREMLPVLEAVAKAGKPLLIIAEDVEGEALATLVVNTMRGIVKVAAVKAPGFGDRRKAMLQDIATLTAGTVISEEIGLELEKATLEDLGQAKRVVINKDTTIIIDGVGDEVAIQGRVTQIRQQIEDATSDYDKEKLQERVAKLAGGVAVIKVGAATEVEMKEKKARVEDALHATRAAVEEGVVAGGGVALIRAAASISVSGLKGDNEDQNVGIKVALRAMESPLRQIVINAGEEASVIANTVKAGEGSYGYNAYTEEYGDMIAMGILDPTKVTRSALQYAASIAGLMITTECMVTDLPKGDAPDLGAGGMGGMGGMGGMM</sequence>
<keyword id="KW-0067">ATP-binding</keyword>
<keyword id="KW-0143">Chaperone</keyword>
<keyword id="KW-0963">Cytoplasm</keyword>
<keyword id="KW-0413">Isomerase</keyword>
<keyword id="KW-0547">Nucleotide-binding</keyword>
<keyword id="KW-1185">Reference proteome</keyword>
<protein>
    <recommendedName>
        <fullName evidence="1">Chaperonin GroEL</fullName>
        <ecNumber evidence="1">5.6.1.7</ecNumber>
    </recommendedName>
    <alternativeName>
        <fullName evidence="1">60 kDa chaperonin</fullName>
    </alternativeName>
    <alternativeName>
        <fullName evidence="1">Chaperonin-60</fullName>
        <shortName evidence="1">Cpn60</shortName>
    </alternativeName>
</protein>
<reference key="1">
    <citation type="journal article" date="2004" name="Proc. Natl. Acad. Sci. U.S.A.">
        <title>Genome sequence of the enterobacterial phytopathogen Erwinia carotovora subsp. atroseptica and characterization of virulence factors.</title>
        <authorList>
            <person name="Bell K.S."/>
            <person name="Sebaihia M."/>
            <person name="Pritchard L."/>
            <person name="Holden M.T.G."/>
            <person name="Hyman L.J."/>
            <person name="Holeva M.C."/>
            <person name="Thomson N.R."/>
            <person name="Bentley S.D."/>
            <person name="Churcher L.J.C."/>
            <person name="Mungall K."/>
            <person name="Atkin R."/>
            <person name="Bason N."/>
            <person name="Brooks K."/>
            <person name="Chillingworth T."/>
            <person name="Clark K."/>
            <person name="Doggett J."/>
            <person name="Fraser A."/>
            <person name="Hance Z."/>
            <person name="Hauser H."/>
            <person name="Jagels K."/>
            <person name="Moule S."/>
            <person name="Norbertczak H."/>
            <person name="Ormond D."/>
            <person name="Price C."/>
            <person name="Quail M.A."/>
            <person name="Sanders M."/>
            <person name="Walker D."/>
            <person name="Whitehead S."/>
            <person name="Salmond G.P.C."/>
            <person name="Birch P.R.J."/>
            <person name="Parkhill J."/>
            <person name="Toth I.K."/>
        </authorList>
    </citation>
    <scope>NUCLEOTIDE SEQUENCE [LARGE SCALE GENOMIC DNA]</scope>
    <source>
        <strain>SCRI 1043 / ATCC BAA-672</strain>
    </source>
</reference>
<proteinExistence type="inferred from homology"/>
<evidence type="ECO:0000255" key="1">
    <source>
        <dbReference type="HAMAP-Rule" id="MF_00600"/>
    </source>
</evidence>
<name>CH60_PECAS</name>
<accession>Q6D9J0</accession>
<comment type="function">
    <text evidence="1">Together with its co-chaperonin GroES, plays an essential role in assisting protein folding. The GroEL-GroES system forms a nano-cage that allows encapsulation of the non-native substrate proteins and provides a physical environment optimized to promote and accelerate protein folding.</text>
</comment>
<comment type="catalytic activity">
    <reaction evidence="1">
        <text>ATP + H2O + a folded polypeptide = ADP + phosphate + an unfolded polypeptide.</text>
        <dbReference type="EC" id="5.6.1.7"/>
    </reaction>
</comment>
<comment type="subunit">
    <text evidence="1">Forms a cylinder of 14 subunits composed of two heptameric rings stacked back-to-back. Interacts with the co-chaperonin GroES.</text>
</comment>
<comment type="subcellular location">
    <subcellularLocation>
        <location evidence="1">Cytoplasm</location>
    </subcellularLocation>
</comment>
<comment type="similarity">
    <text evidence="1">Belongs to the chaperonin (HSP60) family.</text>
</comment>
<gene>
    <name evidence="1" type="primary">groEL</name>
    <name evidence="1" type="synonym">groL</name>
    <name type="ordered locus">ECA0625</name>
</gene>